<evidence type="ECO:0000255" key="1">
    <source>
        <dbReference type="HAMAP-Rule" id="MF_00335"/>
    </source>
</evidence>
<evidence type="ECO:0000255" key="2">
    <source>
        <dbReference type="PROSITE-ProRule" id="PRU01175"/>
    </source>
</evidence>
<evidence type="ECO:0000256" key="3">
    <source>
        <dbReference type="SAM" id="MobiDB-lite"/>
    </source>
</evidence>
<comment type="function">
    <text evidence="1">Endoribonuclease that initiates mRNA decay.</text>
</comment>
<comment type="subcellular location">
    <subcellularLocation>
        <location evidence="1">Cell membrane</location>
        <topology evidence="1">Single-pass membrane protein</topology>
    </subcellularLocation>
</comment>
<comment type="similarity">
    <text evidence="1">Belongs to the RNase Y family.</text>
</comment>
<reference key="1">
    <citation type="submission" date="2007-05" db="EMBL/GenBank/DDBJ databases">
        <title>Complete sequence of Dehalococcoides sp. BAV1.</title>
        <authorList>
            <consortium name="US DOE Joint Genome Institute"/>
            <person name="Copeland A."/>
            <person name="Lucas S."/>
            <person name="Lapidus A."/>
            <person name="Barry K."/>
            <person name="Detter J.C."/>
            <person name="Glavina del Rio T."/>
            <person name="Hammon N."/>
            <person name="Israni S."/>
            <person name="Pitluck S."/>
            <person name="Lowry S."/>
            <person name="Clum A."/>
            <person name="Schmutz J."/>
            <person name="Larimer F."/>
            <person name="Land M."/>
            <person name="Hauser L."/>
            <person name="Kyrpides N."/>
            <person name="Kim E."/>
            <person name="Ritalahti K.M."/>
            <person name="Loeffler F."/>
            <person name="Richardson P."/>
        </authorList>
    </citation>
    <scope>NUCLEOTIDE SEQUENCE [LARGE SCALE GENOMIC DNA]</scope>
    <source>
        <strain>ATCC BAA-2100 / JCM 16839 / KCTC 5957 / BAV1</strain>
    </source>
</reference>
<sequence>MFEFFMETAPATTTGLPLSAILAIFFSFIIGIVFGGMALFVFRGFIMNRQLRIAQRKATKMLADSKLEAKDVLVEAKREADKTRNSAETELKERRSELAKQENRVIQKTEALDRKLENLEQREQSLTNREKSIDETQSQIEEIRENELKRLEEVANMTTEQAKTSLLEMLEGEMQQETSRRLREWEIKIKAEADEKAREVVSQAIQRCASDVVTETTTNVVPLPSDEMKGRLIGREGRNIRALEQATGVDLIIDDTPEAVTISSFDPVRREVARQALSKLIIDGRIHPARIEEVVTKAKEEVEAAMIASGEQAAYQAGVHGLRPEIIKVMGRLKYRTSYGQNVLQHSIEVAQMSGMIGSELGVNVTLARRAGFLHDIGKAVDRDVEGTHTQIGADMVKQWEKSPEVIKGVAEHHFDTPTVSIWGFIVSAADAISSARPGARRESLENYIKRLKALEEIADSFKGVEKSFAIQAGREVRIMVKPDEIDDLGAMRLARDIVKRIEDGLEYPGQIKVTVIRETRSVDFAK</sequence>
<keyword id="KW-1003">Cell membrane</keyword>
<keyword id="KW-0255">Endonuclease</keyword>
<keyword id="KW-0378">Hydrolase</keyword>
<keyword id="KW-0472">Membrane</keyword>
<keyword id="KW-0540">Nuclease</keyword>
<keyword id="KW-0694">RNA-binding</keyword>
<keyword id="KW-0812">Transmembrane</keyword>
<keyword id="KW-1133">Transmembrane helix</keyword>
<name>RNY_DEHMB</name>
<dbReference type="EC" id="3.1.-.-" evidence="1"/>
<dbReference type="EMBL" id="CP000688">
    <property type="protein sequence ID" value="ABQ17931.1"/>
    <property type="molecule type" value="Genomic_DNA"/>
</dbReference>
<dbReference type="SMR" id="A5FPE4"/>
<dbReference type="KEGG" id="deb:DehaBAV1_1354"/>
<dbReference type="PATRIC" id="fig|216389.18.peg.1427"/>
<dbReference type="HOGENOM" id="CLU_028328_1_0_0"/>
<dbReference type="GO" id="GO:0005886">
    <property type="term" value="C:plasma membrane"/>
    <property type="evidence" value="ECO:0007669"/>
    <property type="project" value="UniProtKB-SubCell"/>
</dbReference>
<dbReference type="GO" id="GO:0003723">
    <property type="term" value="F:RNA binding"/>
    <property type="evidence" value="ECO:0007669"/>
    <property type="project" value="UniProtKB-UniRule"/>
</dbReference>
<dbReference type="GO" id="GO:0004521">
    <property type="term" value="F:RNA endonuclease activity"/>
    <property type="evidence" value="ECO:0007669"/>
    <property type="project" value="UniProtKB-UniRule"/>
</dbReference>
<dbReference type="GO" id="GO:0006402">
    <property type="term" value="P:mRNA catabolic process"/>
    <property type="evidence" value="ECO:0007669"/>
    <property type="project" value="UniProtKB-UniRule"/>
</dbReference>
<dbReference type="CDD" id="cd00077">
    <property type="entry name" value="HDc"/>
    <property type="match status" value="1"/>
</dbReference>
<dbReference type="CDD" id="cd22431">
    <property type="entry name" value="KH-I_RNaseY"/>
    <property type="match status" value="1"/>
</dbReference>
<dbReference type="Gene3D" id="1.10.3210.10">
    <property type="entry name" value="Hypothetical protein af1432"/>
    <property type="match status" value="1"/>
</dbReference>
<dbReference type="Gene3D" id="3.30.1370.10">
    <property type="entry name" value="K Homology domain, type 1"/>
    <property type="match status" value="1"/>
</dbReference>
<dbReference type="HAMAP" id="MF_00335">
    <property type="entry name" value="RNase_Y"/>
    <property type="match status" value="1"/>
</dbReference>
<dbReference type="InterPro" id="IPR003607">
    <property type="entry name" value="HD/PDEase_dom"/>
</dbReference>
<dbReference type="InterPro" id="IPR006674">
    <property type="entry name" value="HD_domain"/>
</dbReference>
<dbReference type="InterPro" id="IPR006675">
    <property type="entry name" value="HDIG_dom"/>
</dbReference>
<dbReference type="InterPro" id="IPR004087">
    <property type="entry name" value="KH_dom"/>
</dbReference>
<dbReference type="InterPro" id="IPR004088">
    <property type="entry name" value="KH_dom_type_1"/>
</dbReference>
<dbReference type="InterPro" id="IPR036612">
    <property type="entry name" value="KH_dom_type_1_sf"/>
</dbReference>
<dbReference type="InterPro" id="IPR017705">
    <property type="entry name" value="Ribonuclease_Y"/>
</dbReference>
<dbReference type="InterPro" id="IPR022711">
    <property type="entry name" value="RNase_Y_N"/>
</dbReference>
<dbReference type="NCBIfam" id="TIGR00277">
    <property type="entry name" value="HDIG"/>
    <property type="match status" value="1"/>
</dbReference>
<dbReference type="NCBIfam" id="TIGR03319">
    <property type="entry name" value="RNase_Y"/>
    <property type="match status" value="1"/>
</dbReference>
<dbReference type="PANTHER" id="PTHR12826">
    <property type="entry name" value="RIBONUCLEASE Y"/>
    <property type="match status" value="1"/>
</dbReference>
<dbReference type="PANTHER" id="PTHR12826:SF15">
    <property type="entry name" value="RIBONUCLEASE Y"/>
    <property type="match status" value="1"/>
</dbReference>
<dbReference type="Pfam" id="PF01966">
    <property type="entry name" value="HD"/>
    <property type="match status" value="1"/>
</dbReference>
<dbReference type="Pfam" id="PF00013">
    <property type="entry name" value="KH_1"/>
    <property type="match status" value="1"/>
</dbReference>
<dbReference type="Pfam" id="PF12072">
    <property type="entry name" value="RNase_Y_N"/>
    <property type="match status" value="1"/>
</dbReference>
<dbReference type="SMART" id="SM00471">
    <property type="entry name" value="HDc"/>
    <property type="match status" value="1"/>
</dbReference>
<dbReference type="SMART" id="SM00322">
    <property type="entry name" value="KH"/>
    <property type="match status" value="1"/>
</dbReference>
<dbReference type="SUPFAM" id="SSF54791">
    <property type="entry name" value="Eukaryotic type KH-domain (KH-domain type I)"/>
    <property type="match status" value="1"/>
</dbReference>
<dbReference type="SUPFAM" id="SSF109604">
    <property type="entry name" value="HD-domain/PDEase-like"/>
    <property type="match status" value="1"/>
</dbReference>
<dbReference type="PROSITE" id="PS51831">
    <property type="entry name" value="HD"/>
    <property type="match status" value="1"/>
</dbReference>
<dbReference type="PROSITE" id="PS50084">
    <property type="entry name" value="KH_TYPE_1"/>
    <property type="match status" value="1"/>
</dbReference>
<protein>
    <recommendedName>
        <fullName evidence="1">Ribonuclease Y</fullName>
        <shortName evidence="1">RNase Y</shortName>
        <ecNumber evidence="1">3.1.-.-</ecNumber>
    </recommendedName>
</protein>
<feature type="chain" id="PRO_0000344860" description="Ribonuclease Y">
    <location>
        <begin position="1"/>
        <end position="527"/>
    </location>
</feature>
<feature type="transmembrane region" description="Helical" evidence="1">
    <location>
        <begin position="21"/>
        <end position="41"/>
    </location>
</feature>
<feature type="domain" description="KH" evidence="1">
    <location>
        <begin position="217"/>
        <end position="302"/>
    </location>
</feature>
<feature type="domain" description="HD" evidence="2">
    <location>
        <begin position="343"/>
        <end position="436"/>
    </location>
</feature>
<feature type="region of interest" description="Disordered" evidence="3">
    <location>
        <begin position="78"/>
        <end position="97"/>
    </location>
</feature>
<accession>A5FPE4</accession>
<gene>
    <name evidence="1" type="primary">rny</name>
    <name type="ordered locus">DehaBAV1_1354</name>
</gene>
<organism>
    <name type="scientific">Dehalococcoides mccartyi (strain ATCC BAA-2100 / JCM 16839 / KCTC 5957 / BAV1)</name>
    <dbReference type="NCBI Taxonomy" id="216389"/>
    <lineage>
        <taxon>Bacteria</taxon>
        <taxon>Bacillati</taxon>
        <taxon>Chloroflexota</taxon>
        <taxon>Dehalococcoidia</taxon>
        <taxon>Dehalococcoidales</taxon>
        <taxon>Dehalococcoidaceae</taxon>
        <taxon>Dehalococcoides</taxon>
    </lineage>
</organism>
<proteinExistence type="inferred from homology"/>